<reference key="1">
    <citation type="journal article" date="2005" name="J. Bacteriol.">
        <title>The genome of Sulfolobus acidocaldarius, a model organism of the Crenarchaeota.</title>
        <authorList>
            <person name="Chen L."/>
            <person name="Bruegger K."/>
            <person name="Skovgaard M."/>
            <person name="Redder P."/>
            <person name="She Q."/>
            <person name="Torarinsson E."/>
            <person name="Greve B."/>
            <person name="Awayez M."/>
            <person name="Zibat A."/>
            <person name="Klenk H.-P."/>
            <person name="Garrett R.A."/>
        </authorList>
    </citation>
    <scope>NUCLEOTIDE SEQUENCE [LARGE SCALE GENOMIC DNA]</scope>
    <source>
        <strain>ATCC 33909 / DSM 639 / JCM 8929 / NBRC 15157 / NCIMB 11770</strain>
    </source>
</reference>
<protein>
    <recommendedName>
        <fullName evidence="1">Small ribosomal subunit protein eS27</fullName>
    </recommendedName>
    <alternativeName>
        <fullName evidence="2">30S ribosomal protein S27e</fullName>
    </alternativeName>
</protein>
<proteinExistence type="evidence at protein level"/>
<dbReference type="EMBL" id="CP000077">
    <property type="protein sequence ID" value="AAY80618.1"/>
    <property type="molecule type" value="Genomic_DNA"/>
</dbReference>
<dbReference type="RefSeq" id="WP_011278120.1">
    <property type="nucleotide sequence ID" value="NC_007181.1"/>
</dbReference>
<dbReference type="PDB" id="8HKX">
    <property type="method" value="EM"/>
    <property type="resolution" value="3.14 A"/>
    <property type="chains" value="S27E=1-59"/>
</dbReference>
<dbReference type="PDB" id="8HKY">
    <property type="method" value="EM"/>
    <property type="resolution" value="4.45 A"/>
    <property type="chains" value="S27E=1-59"/>
</dbReference>
<dbReference type="PDB" id="8HKZ">
    <property type="method" value="EM"/>
    <property type="resolution" value="4.78 A"/>
    <property type="chains" value="S27E=1-59"/>
</dbReference>
<dbReference type="PDB" id="8HL1">
    <property type="method" value="EM"/>
    <property type="resolution" value="3.93 A"/>
    <property type="chains" value="S27E=1-59"/>
</dbReference>
<dbReference type="PDB" id="8HL2">
    <property type="method" value="EM"/>
    <property type="resolution" value="4.10 A"/>
    <property type="chains" value="S27E=1-59"/>
</dbReference>
<dbReference type="PDB" id="8HL3">
    <property type="method" value="EM"/>
    <property type="resolution" value="4.80 A"/>
    <property type="chains" value="S27E=1-59"/>
</dbReference>
<dbReference type="PDB" id="8HL4">
    <property type="method" value="EM"/>
    <property type="resolution" value="4.62 A"/>
    <property type="chains" value="S27E=1-59"/>
</dbReference>
<dbReference type="PDB" id="8HL5">
    <property type="method" value="EM"/>
    <property type="resolution" value="5.72 A"/>
    <property type="chains" value="S27E=1-59"/>
</dbReference>
<dbReference type="PDB" id="8WKP">
    <property type="method" value="EM"/>
    <property type="resolution" value="4.62 A"/>
    <property type="chains" value="S27E=1-59"/>
</dbReference>
<dbReference type="PDB" id="8WQ2">
    <property type="method" value="EM"/>
    <property type="resolution" value="4.10 A"/>
    <property type="chains" value="S27E=1-59"/>
</dbReference>
<dbReference type="PDB" id="8WQ4">
    <property type="method" value="EM"/>
    <property type="resolution" value="4.53 A"/>
    <property type="chains" value="S27E=1-59"/>
</dbReference>
<dbReference type="PDBsum" id="8HKX"/>
<dbReference type="PDBsum" id="8HKY"/>
<dbReference type="PDBsum" id="8HKZ"/>
<dbReference type="PDBsum" id="8HL1"/>
<dbReference type="PDBsum" id="8HL2"/>
<dbReference type="PDBsum" id="8HL3"/>
<dbReference type="PDBsum" id="8HL4"/>
<dbReference type="PDBsum" id="8HL5"/>
<dbReference type="PDBsum" id="8WKP"/>
<dbReference type="PDBsum" id="8WQ2"/>
<dbReference type="PDBsum" id="8WQ4"/>
<dbReference type="EMDB" id="EMD-34862"/>
<dbReference type="EMDB" id="EMD-34863"/>
<dbReference type="EMDB" id="EMD-34864"/>
<dbReference type="EMDB" id="EMD-34866"/>
<dbReference type="EMDB" id="EMD-34867"/>
<dbReference type="EMDB" id="EMD-34868"/>
<dbReference type="EMDB" id="EMD-34869"/>
<dbReference type="EMDB" id="EMD-34870"/>
<dbReference type="EMDB" id="EMD-37604"/>
<dbReference type="EMDB" id="EMD-37733"/>
<dbReference type="EMDB" id="EMD-37734"/>
<dbReference type="SMR" id="Q4J9B1"/>
<dbReference type="STRING" id="330779.Saci_1276"/>
<dbReference type="GeneID" id="14551781"/>
<dbReference type="KEGG" id="sai:Saci_1276"/>
<dbReference type="PATRIC" id="fig|330779.12.peg.1234"/>
<dbReference type="eggNOG" id="arCOG04108">
    <property type="taxonomic scope" value="Archaea"/>
</dbReference>
<dbReference type="HOGENOM" id="CLU_199465_0_0_2"/>
<dbReference type="Proteomes" id="UP000001018">
    <property type="component" value="Chromosome"/>
</dbReference>
<dbReference type="GO" id="GO:1990904">
    <property type="term" value="C:ribonucleoprotein complex"/>
    <property type="evidence" value="ECO:0007669"/>
    <property type="project" value="UniProtKB-KW"/>
</dbReference>
<dbReference type="GO" id="GO:0005840">
    <property type="term" value="C:ribosome"/>
    <property type="evidence" value="ECO:0007669"/>
    <property type="project" value="UniProtKB-KW"/>
</dbReference>
<dbReference type="GO" id="GO:0003735">
    <property type="term" value="F:structural constituent of ribosome"/>
    <property type="evidence" value="ECO:0007669"/>
    <property type="project" value="InterPro"/>
</dbReference>
<dbReference type="GO" id="GO:0008270">
    <property type="term" value="F:zinc ion binding"/>
    <property type="evidence" value="ECO:0007669"/>
    <property type="project" value="UniProtKB-UniRule"/>
</dbReference>
<dbReference type="GO" id="GO:0006412">
    <property type="term" value="P:translation"/>
    <property type="evidence" value="ECO:0007669"/>
    <property type="project" value="UniProtKB-UniRule"/>
</dbReference>
<dbReference type="Gene3D" id="2.20.25.100">
    <property type="entry name" value="Zn-binding ribosomal proteins"/>
    <property type="match status" value="1"/>
</dbReference>
<dbReference type="HAMAP" id="MF_00371">
    <property type="entry name" value="Ribosomal_eS27"/>
    <property type="match status" value="1"/>
</dbReference>
<dbReference type="InterPro" id="IPR000592">
    <property type="entry name" value="Ribosomal_eS27"/>
</dbReference>
<dbReference type="InterPro" id="IPR023407">
    <property type="entry name" value="Ribosomal_eS27_Zn-bd_dom_sf"/>
</dbReference>
<dbReference type="InterPro" id="IPR011332">
    <property type="entry name" value="Ribosomal_zn-bd"/>
</dbReference>
<dbReference type="NCBIfam" id="NF001629">
    <property type="entry name" value="PRK00415.1"/>
    <property type="match status" value="1"/>
</dbReference>
<dbReference type="Pfam" id="PF01667">
    <property type="entry name" value="Ribosomal_S27e"/>
    <property type="match status" value="1"/>
</dbReference>
<dbReference type="SUPFAM" id="SSF57829">
    <property type="entry name" value="Zn-binding ribosomal proteins"/>
    <property type="match status" value="1"/>
</dbReference>
<dbReference type="PROSITE" id="PS01168">
    <property type="entry name" value="RIBOSOMAL_S27E"/>
    <property type="match status" value="1"/>
</dbReference>
<name>RS27_SULAC</name>
<keyword id="KW-0002">3D-structure</keyword>
<keyword id="KW-0479">Metal-binding</keyword>
<keyword id="KW-1185">Reference proteome</keyword>
<keyword id="KW-0687">Ribonucleoprotein</keyword>
<keyword id="KW-0689">Ribosomal protein</keyword>
<keyword id="KW-0862">Zinc</keyword>
<keyword id="KW-0863">Zinc-finger</keyword>
<evidence type="ECO:0000255" key="1">
    <source>
        <dbReference type="HAMAP-Rule" id="MF_00371"/>
    </source>
</evidence>
<evidence type="ECO:0000305" key="2"/>
<feature type="chain" id="PRO_0000149081" description="Small ribosomal subunit protein eS27">
    <location>
        <begin position="1"/>
        <end position="66"/>
    </location>
</feature>
<feature type="zinc finger region" description="C4-type" evidence="1">
    <location>
        <begin position="21"/>
        <end position="43"/>
    </location>
</feature>
<feature type="binding site" evidence="1">
    <location>
        <position position="21"/>
    </location>
    <ligand>
        <name>Zn(2+)</name>
        <dbReference type="ChEBI" id="CHEBI:29105"/>
    </ligand>
</feature>
<feature type="binding site" evidence="1">
    <location>
        <position position="24"/>
    </location>
    <ligand>
        <name>Zn(2+)</name>
        <dbReference type="ChEBI" id="CHEBI:29105"/>
    </ligand>
</feature>
<feature type="binding site" evidence="1">
    <location>
        <position position="40"/>
    </location>
    <ligand>
        <name>Zn(2+)</name>
        <dbReference type="ChEBI" id="CHEBI:29105"/>
    </ligand>
</feature>
<feature type="binding site" evidence="1">
    <location>
        <position position="43"/>
    </location>
    <ligand>
        <name>Zn(2+)</name>
        <dbReference type="ChEBI" id="CHEBI:29105"/>
    </ligand>
</feature>
<sequence>MKAKFKILIPEPKSKFIRVKCRQCNNEQVIFSNATFPVRCLSCGAQIVIPKGGKAKIEGDTVRILG</sequence>
<comment type="cofactor">
    <cofactor evidence="1">
        <name>Zn(2+)</name>
        <dbReference type="ChEBI" id="CHEBI:29105"/>
    </cofactor>
    <text evidence="1">Binds 1 zinc ion per subunit.</text>
</comment>
<comment type="subunit">
    <text evidence="1">Part of the 30S ribosomal subunit.</text>
</comment>
<comment type="similarity">
    <text evidence="1">Belongs to the eukaryotic ribosomal protein eS27 family.</text>
</comment>
<accession>Q4J9B1</accession>
<gene>
    <name evidence="1" type="primary">rps27e</name>
    <name type="ordered locus">Saci_1276</name>
</gene>
<organism>
    <name type="scientific">Sulfolobus acidocaldarius (strain ATCC 33909 / DSM 639 / JCM 8929 / NBRC 15157 / NCIMB 11770)</name>
    <dbReference type="NCBI Taxonomy" id="330779"/>
    <lineage>
        <taxon>Archaea</taxon>
        <taxon>Thermoproteota</taxon>
        <taxon>Thermoprotei</taxon>
        <taxon>Sulfolobales</taxon>
        <taxon>Sulfolobaceae</taxon>
        <taxon>Sulfolobus</taxon>
    </lineage>
</organism>